<sequence>MAENEHFRNGIDYVELVNQEGHTFHYICRAGNMNELVDMAPVILRNLDLLFQYDHEGRQCTHIAAEYDVSNAVMKIELLVMLGADINSRELKFGNTLLHIAAGTENYQLAEWLCKKPGVELGAINFLYKTAYHIAYERQNARMMEILRVNGAVCDDPIDIDESDETSSESNEGISI</sequence>
<name>IKBG1_MDBVW</name>
<gene>
    <name type="primary">G3</name>
</gene>
<accession>Q5I149</accession>
<evidence type="ECO:0000250" key="1"/>
<evidence type="ECO:0000305" key="2"/>
<proteinExistence type="inferred from homology"/>
<keyword id="KW-0040">ANK repeat</keyword>
<keyword id="KW-0945">Host-virus interaction</keyword>
<keyword id="KW-1100">Inhibition of host NF-kappa-B by virus</keyword>
<keyword id="KW-1185">Reference proteome</keyword>
<keyword id="KW-0677">Repeat</keyword>
<dbReference type="EMBL" id="AY875684">
    <property type="protein sequence ID" value="AAW51781.1"/>
    <property type="molecule type" value="Genomic_DNA"/>
</dbReference>
<dbReference type="RefSeq" id="YP_239379.1">
    <property type="nucleotide sequence ID" value="NC_007034.1"/>
</dbReference>
<dbReference type="SMR" id="Q5I149"/>
<dbReference type="KEGG" id="vg:5075814"/>
<dbReference type="Proteomes" id="UP000008168">
    <property type="component" value="Genome"/>
</dbReference>
<dbReference type="GO" id="GO:0051059">
    <property type="term" value="F:NF-kappaB binding"/>
    <property type="evidence" value="ECO:0007669"/>
    <property type="project" value="TreeGrafter"/>
</dbReference>
<dbReference type="GO" id="GO:0071356">
    <property type="term" value="P:cellular response to tumor necrosis factor"/>
    <property type="evidence" value="ECO:0007669"/>
    <property type="project" value="TreeGrafter"/>
</dbReference>
<dbReference type="GO" id="GO:0085034">
    <property type="term" value="P:symbiont-mediated suppression of host NF-kappaB cascade"/>
    <property type="evidence" value="ECO:0007669"/>
    <property type="project" value="UniProtKB-KW"/>
</dbReference>
<dbReference type="GO" id="GO:0034142">
    <property type="term" value="P:toll-like receptor 4 signaling pathway"/>
    <property type="evidence" value="ECO:0007669"/>
    <property type="project" value="TreeGrafter"/>
</dbReference>
<dbReference type="Gene3D" id="1.25.40.20">
    <property type="entry name" value="Ankyrin repeat-containing domain"/>
    <property type="match status" value="1"/>
</dbReference>
<dbReference type="InterPro" id="IPR002110">
    <property type="entry name" value="Ankyrin_rpt"/>
</dbReference>
<dbReference type="InterPro" id="IPR036770">
    <property type="entry name" value="Ankyrin_rpt-contain_sf"/>
</dbReference>
<dbReference type="InterPro" id="IPR051070">
    <property type="entry name" value="NF-kappa-B_inhibitor"/>
</dbReference>
<dbReference type="PANTHER" id="PTHR46680">
    <property type="entry name" value="NF-KAPPA-B INHIBITOR ALPHA"/>
    <property type="match status" value="1"/>
</dbReference>
<dbReference type="PANTHER" id="PTHR46680:SF1">
    <property type="entry name" value="NF-KAPPA-B INHIBITOR ALPHA"/>
    <property type="match status" value="1"/>
</dbReference>
<dbReference type="Pfam" id="PF12796">
    <property type="entry name" value="Ank_2"/>
    <property type="match status" value="1"/>
</dbReference>
<dbReference type="SMART" id="SM00248">
    <property type="entry name" value="ANK"/>
    <property type="match status" value="3"/>
</dbReference>
<dbReference type="SUPFAM" id="SSF48403">
    <property type="entry name" value="Ankyrin repeat"/>
    <property type="match status" value="1"/>
</dbReference>
<dbReference type="PROSITE" id="PS50297">
    <property type="entry name" value="ANK_REP_REGION"/>
    <property type="match status" value="1"/>
</dbReference>
<organismHost>
    <name type="scientific">Microplitis demolitor</name>
    <name type="common">Parasitoid wasp</name>
    <dbReference type="NCBI Taxonomy" id="69319"/>
</organismHost>
<feature type="chain" id="PRO_0000405363" description="I-Kappa-B like protein G1">
    <location>
        <begin position="1"/>
        <end position="176"/>
    </location>
</feature>
<feature type="repeat" description="ANK 1">
    <location>
        <begin position="56"/>
        <end position="88"/>
    </location>
</feature>
<feature type="repeat" description="ANK 2">
    <location>
        <begin position="93"/>
        <end position="123"/>
    </location>
</feature>
<feature type="repeat" description="ANK 3">
    <location>
        <begin position="127"/>
        <end position="156"/>
    </location>
</feature>
<comment type="function">
    <text evidence="1">Suppresses the host immune response through NF-kappa-B inactivation. Possesses ankyrin repeat domains required for NF-kappa-B binding but lacks the regulatory regions required for dissociation from NF-kappa-B and degradation. Therefore, prevents host NF-kappa-B release and subsequent activation (By similarity).</text>
</comment>
<comment type="similarity">
    <text evidence="2">Belongs to the polydnaviridae I-Kappa-B-like protein family.</text>
</comment>
<organism>
    <name type="scientific">Microplitis demolitor bracovirus (isolate Webb)</name>
    <name type="common">MdBV</name>
    <dbReference type="NCBI Taxonomy" id="654919"/>
    <lineage>
        <taxon>Viruses</taxon>
        <taxon>Viruses incertae sedis</taxon>
        <taxon>Polydnaviriformidae</taxon>
        <taxon>Bracoviriform</taxon>
        <taxon>Microplitis demolitor bracovirus</taxon>
    </lineage>
</organism>
<protein>
    <recommendedName>
        <fullName>I-Kappa-B like protein G1</fullName>
    </recommendedName>
</protein>
<reference key="1">
    <citation type="journal article" date="2006" name="Virology">
        <title>Polydnavirus genomes reflect their dual roles as mutualists and pathogens.</title>
        <authorList>
            <person name="Webb B.A."/>
            <person name="Strand M.R."/>
            <person name="Dickey S.E."/>
            <person name="Beck M.H."/>
            <person name="Hilgarth R.S."/>
            <person name="Barney W.E."/>
            <person name="Kadash K."/>
            <person name="Kroemer J.A."/>
            <person name="Lindstrom K.G."/>
            <person name="Rattanadechakul W."/>
            <person name="Shelby K.S."/>
            <person name="Thoetkiattikul H."/>
            <person name="Turnbull M.W."/>
            <person name="Witherell R.A."/>
        </authorList>
    </citation>
    <scope>NUCLEOTIDE SEQUENCE [GENOMIC DNA]</scope>
</reference>
<reference key="2">
    <citation type="journal article" date="2005" name="Proc. Natl. Acad. Sci. U.S.A.">
        <title>Inhibitor kappaB-like proteins from a polydnavirus inhibit NF-kappaB activation and suppress the insect immune response.</title>
        <authorList>
            <person name="Thoetkiattikul H."/>
            <person name="Beck M.H."/>
            <person name="Strand M.R."/>
        </authorList>
    </citation>
    <scope>NUCLEOTIDE SEQUENCE [GENOMIC DNA]</scope>
</reference>